<sequence>MSYRKLGWDSSQRKAMLREMTTQLIINERIVTTEARAKEVRRTAEKMITLGKRGDLAARRKAAAFVRNEIADIHEEGDEVVVKSALQKLFSDVAPRYKDRNGGYTRIMKLAVPRKGDAAPMVVLELV</sequence>
<keyword id="KW-1185">Reference proteome</keyword>
<keyword id="KW-0687">Ribonucleoprotein</keyword>
<keyword id="KW-0689">Ribosomal protein</keyword>
<feature type="chain" id="PRO_1000055849" description="Large ribosomal subunit protein bL17">
    <location>
        <begin position="1"/>
        <end position="127"/>
    </location>
</feature>
<accession>Q1GBJ1</accession>
<dbReference type="EMBL" id="CR954253">
    <property type="protein sequence ID" value="CAI97258.1"/>
    <property type="molecule type" value="Genomic_DNA"/>
</dbReference>
<dbReference type="RefSeq" id="WP_002878136.1">
    <property type="nucleotide sequence ID" value="NZ_JQAV01000001.1"/>
</dbReference>
<dbReference type="SMR" id="Q1GBJ1"/>
<dbReference type="STRING" id="390333.Ldb0423"/>
<dbReference type="GeneID" id="69668453"/>
<dbReference type="KEGG" id="ldb:Ldb0423"/>
<dbReference type="eggNOG" id="COG0203">
    <property type="taxonomic scope" value="Bacteria"/>
</dbReference>
<dbReference type="HOGENOM" id="CLU_074407_2_2_9"/>
<dbReference type="BioCyc" id="LDEL390333:LDB_RS01800-MONOMER"/>
<dbReference type="Proteomes" id="UP000001259">
    <property type="component" value="Chromosome"/>
</dbReference>
<dbReference type="GO" id="GO:0022625">
    <property type="term" value="C:cytosolic large ribosomal subunit"/>
    <property type="evidence" value="ECO:0007669"/>
    <property type="project" value="TreeGrafter"/>
</dbReference>
<dbReference type="GO" id="GO:0003735">
    <property type="term" value="F:structural constituent of ribosome"/>
    <property type="evidence" value="ECO:0007669"/>
    <property type="project" value="InterPro"/>
</dbReference>
<dbReference type="GO" id="GO:0006412">
    <property type="term" value="P:translation"/>
    <property type="evidence" value="ECO:0007669"/>
    <property type="project" value="UniProtKB-UniRule"/>
</dbReference>
<dbReference type="FunFam" id="3.90.1030.10:FF:000002">
    <property type="entry name" value="50S ribosomal protein L17"/>
    <property type="match status" value="1"/>
</dbReference>
<dbReference type="Gene3D" id="3.90.1030.10">
    <property type="entry name" value="Ribosomal protein L17"/>
    <property type="match status" value="1"/>
</dbReference>
<dbReference type="HAMAP" id="MF_01368">
    <property type="entry name" value="Ribosomal_bL17"/>
    <property type="match status" value="1"/>
</dbReference>
<dbReference type="InterPro" id="IPR000456">
    <property type="entry name" value="Ribosomal_bL17"/>
</dbReference>
<dbReference type="InterPro" id="IPR047859">
    <property type="entry name" value="Ribosomal_bL17_CS"/>
</dbReference>
<dbReference type="InterPro" id="IPR036373">
    <property type="entry name" value="Ribosomal_bL17_sf"/>
</dbReference>
<dbReference type="NCBIfam" id="TIGR00059">
    <property type="entry name" value="L17"/>
    <property type="match status" value="1"/>
</dbReference>
<dbReference type="PANTHER" id="PTHR14413:SF16">
    <property type="entry name" value="LARGE RIBOSOMAL SUBUNIT PROTEIN BL17M"/>
    <property type="match status" value="1"/>
</dbReference>
<dbReference type="PANTHER" id="PTHR14413">
    <property type="entry name" value="RIBOSOMAL PROTEIN L17"/>
    <property type="match status" value="1"/>
</dbReference>
<dbReference type="Pfam" id="PF01196">
    <property type="entry name" value="Ribosomal_L17"/>
    <property type="match status" value="1"/>
</dbReference>
<dbReference type="SUPFAM" id="SSF64263">
    <property type="entry name" value="Prokaryotic ribosomal protein L17"/>
    <property type="match status" value="1"/>
</dbReference>
<dbReference type="PROSITE" id="PS01167">
    <property type="entry name" value="RIBOSOMAL_L17"/>
    <property type="match status" value="1"/>
</dbReference>
<organism>
    <name type="scientific">Lactobacillus delbrueckii subsp. bulgaricus (strain ATCC 11842 / DSM 20081 / BCRC 10696 / JCM 1002 / NBRC 13953 / NCIMB 11778 / NCTC 12712 / WDCM 00102 / Lb 14)</name>
    <dbReference type="NCBI Taxonomy" id="390333"/>
    <lineage>
        <taxon>Bacteria</taxon>
        <taxon>Bacillati</taxon>
        <taxon>Bacillota</taxon>
        <taxon>Bacilli</taxon>
        <taxon>Lactobacillales</taxon>
        <taxon>Lactobacillaceae</taxon>
        <taxon>Lactobacillus</taxon>
    </lineage>
</organism>
<gene>
    <name evidence="1" type="primary">rplQ</name>
    <name type="ordered locus">Ldb0423</name>
</gene>
<protein>
    <recommendedName>
        <fullName evidence="1">Large ribosomal subunit protein bL17</fullName>
    </recommendedName>
    <alternativeName>
        <fullName evidence="2">50S ribosomal protein L17</fullName>
    </alternativeName>
</protein>
<name>RL17_LACDA</name>
<evidence type="ECO:0000255" key="1">
    <source>
        <dbReference type="HAMAP-Rule" id="MF_01368"/>
    </source>
</evidence>
<evidence type="ECO:0000305" key="2"/>
<reference key="1">
    <citation type="journal article" date="2006" name="Proc. Natl. Acad. Sci. U.S.A.">
        <title>The complete genome sequence of Lactobacillus bulgaricus reveals extensive and ongoing reductive evolution.</title>
        <authorList>
            <person name="van de Guchte M."/>
            <person name="Penaud S."/>
            <person name="Grimaldi C."/>
            <person name="Barbe V."/>
            <person name="Bryson K."/>
            <person name="Nicolas P."/>
            <person name="Robert C."/>
            <person name="Oztas S."/>
            <person name="Mangenot S."/>
            <person name="Couloux A."/>
            <person name="Loux V."/>
            <person name="Dervyn R."/>
            <person name="Bossy R."/>
            <person name="Bolotin A."/>
            <person name="Batto J.-M."/>
            <person name="Walunas T."/>
            <person name="Gibrat J.-F."/>
            <person name="Bessieres P."/>
            <person name="Weissenbach J."/>
            <person name="Ehrlich S.D."/>
            <person name="Maguin E."/>
        </authorList>
    </citation>
    <scope>NUCLEOTIDE SEQUENCE [LARGE SCALE GENOMIC DNA]</scope>
    <source>
        <strain>ATCC 11842 / DSM 20081 / BCRC 10696 / JCM 1002 / NBRC 13953 / NCIMB 11778 / NCTC 12712 / WDCM 00102 / Lb 14</strain>
    </source>
</reference>
<comment type="subunit">
    <text evidence="1">Part of the 50S ribosomal subunit. Contacts protein L32.</text>
</comment>
<comment type="similarity">
    <text evidence="1">Belongs to the bacterial ribosomal protein bL17 family.</text>
</comment>
<proteinExistence type="inferred from homology"/>